<feature type="chain" id="PRO_0000067547" description="Urease subunit alpha">
    <location>
        <begin position="1"/>
        <end position="567"/>
    </location>
</feature>
<feature type="domain" description="Urease" evidence="1">
    <location>
        <begin position="129"/>
        <end position="567"/>
    </location>
</feature>
<feature type="active site" description="Proton donor" evidence="6">
    <location>
        <position position="320"/>
    </location>
</feature>
<feature type="binding site" evidence="1">
    <location>
        <position position="134"/>
    </location>
    <ligand>
        <name>Ni(2+)</name>
        <dbReference type="ChEBI" id="CHEBI:49786"/>
        <label>1</label>
    </ligand>
</feature>
<feature type="binding site" evidence="1">
    <location>
        <position position="136"/>
    </location>
    <ligand>
        <name>Ni(2+)</name>
        <dbReference type="ChEBI" id="CHEBI:49786"/>
        <label>1</label>
    </ligand>
</feature>
<feature type="binding site" description="via carbamate group" evidence="1">
    <location>
        <position position="217"/>
    </location>
    <ligand>
        <name>Ni(2+)</name>
        <dbReference type="ChEBI" id="CHEBI:49786"/>
        <label>1</label>
    </ligand>
</feature>
<feature type="binding site" description="via carbamate group" evidence="1">
    <location>
        <position position="217"/>
    </location>
    <ligand>
        <name>Ni(2+)</name>
        <dbReference type="ChEBI" id="CHEBI:49786"/>
        <label>2</label>
    </ligand>
</feature>
<feature type="binding site" evidence="1">
    <location>
        <position position="219"/>
    </location>
    <ligand>
        <name>substrate</name>
    </ligand>
</feature>
<feature type="binding site" evidence="1">
    <location>
        <position position="246"/>
    </location>
    <ligand>
        <name>Ni(2+)</name>
        <dbReference type="ChEBI" id="CHEBI:49786"/>
        <label>2</label>
    </ligand>
</feature>
<feature type="binding site" evidence="1">
    <location>
        <position position="272"/>
    </location>
    <ligand>
        <name>Ni(2+)</name>
        <dbReference type="ChEBI" id="CHEBI:49786"/>
        <label>2</label>
    </ligand>
</feature>
<feature type="binding site" evidence="1">
    <location>
        <position position="360"/>
    </location>
    <ligand>
        <name>Ni(2+)</name>
        <dbReference type="ChEBI" id="CHEBI:49786"/>
        <label>1</label>
    </ligand>
</feature>
<feature type="modified residue" description="N6-carboxylysine" evidence="1">
    <location>
        <position position="217"/>
    </location>
</feature>
<feature type="mutagenesis site" description="Abrogates activity." evidence="3">
    <original>V</original>
    <variation>VRRRI</variation>
    <location>
        <position position="267"/>
    </location>
</feature>
<feature type="mutagenesis site" description="Reduces activity 30-fold." evidence="5">
    <original>H</original>
    <variation>L</variation>
    <location>
        <position position="312"/>
    </location>
</feature>
<feature type="mutagenesis site" description="Abrogates activity." evidence="5">
    <original>C</original>
    <variation>A</variation>
    <location>
        <position position="319"/>
    </location>
</feature>
<feature type="mutagenesis site" description="Abrogates activity and reduces binding to nickel ions." evidence="5">
    <original>H</original>
    <variation>L</variation>
    <location>
        <position position="320"/>
    </location>
</feature>
<feature type="mutagenesis site" description="Abrogates activity." evidence="5">
    <original>H</original>
    <variation>L</variation>
    <location>
        <position position="321"/>
    </location>
</feature>
<feature type="mutagenesis site" description="Abrogates activity." evidence="3">
    <original>G</original>
    <variation>GSVDG</variation>
    <location>
        <position position="422"/>
    </location>
</feature>
<feature type="mutagenesis site" description="Reduces activity 12-fold." evidence="5">
    <original>H</original>
    <variation>L</variation>
    <location>
        <position position="472"/>
    </location>
</feature>
<feature type="mutagenesis site" description="Abrogates activity." evidence="3">
    <original>M</original>
    <variation>MRRRI</variation>
    <location>
        <position position="489"/>
    </location>
</feature>
<feature type="mutagenesis site" description="Reduces activity 6-fold." evidence="5">
    <original>H</original>
    <variation>L</variation>
    <location>
        <position position="527"/>
    </location>
</feature>
<feature type="mutagenesis site" description="Reduces activity 300-fold." evidence="5">
    <original>H</original>
    <variation>L</variation>
    <location>
        <position position="533"/>
    </location>
</feature>
<feature type="mutagenesis site" description="Reduces activity 25-fold." evidence="3">
    <original>D</original>
    <variation>DRRRI</variation>
    <location>
        <position position="537"/>
    </location>
</feature>
<feature type="sequence conflict" description="In Ref. 1; AAA25669." evidence="6" ref="1">
    <original>A</original>
    <variation>R</variation>
    <location>
        <position position="454"/>
    </location>
</feature>
<keyword id="KW-0963">Cytoplasm</keyword>
<keyword id="KW-0378">Hydrolase</keyword>
<keyword id="KW-0479">Metal-binding</keyword>
<keyword id="KW-0533">Nickel</keyword>
<keyword id="KW-1185">Reference proteome</keyword>
<keyword id="KW-0843">Virulence</keyword>
<organism>
    <name type="scientific">Proteus mirabilis (strain HI4320)</name>
    <dbReference type="NCBI Taxonomy" id="529507"/>
    <lineage>
        <taxon>Bacteria</taxon>
        <taxon>Pseudomonadati</taxon>
        <taxon>Pseudomonadota</taxon>
        <taxon>Gammaproteobacteria</taxon>
        <taxon>Enterobacterales</taxon>
        <taxon>Morganellaceae</taxon>
        <taxon>Proteus</taxon>
    </lineage>
</organism>
<evidence type="ECO:0000255" key="1">
    <source>
        <dbReference type="HAMAP-Rule" id="MF_01953"/>
    </source>
</evidence>
<evidence type="ECO:0000269" key="2">
    <source>
    </source>
</evidence>
<evidence type="ECO:0000269" key="3">
    <source>
    </source>
</evidence>
<evidence type="ECO:0000269" key="4">
    <source>
    </source>
</evidence>
<evidence type="ECO:0000269" key="5">
    <source>
    </source>
</evidence>
<evidence type="ECO:0000305" key="6"/>
<protein>
    <recommendedName>
        <fullName evidence="1">Urease subunit alpha</fullName>
        <ecNumber evidence="1">3.5.1.5</ecNumber>
    </recommendedName>
    <alternativeName>
        <fullName evidence="1">Urea amidohydrolase subunit alpha</fullName>
    </alternativeName>
</protein>
<name>URE1_PROMH</name>
<proteinExistence type="evidence at protein level"/>
<accession>P17086</accession>
<accession>B4EXN5</accession>
<dbReference type="EC" id="3.5.1.5" evidence="1"/>
<dbReference type="EMBL" id="M31834">
    <property type="protein sequence ID" value="AAA25669.1"/>
    <property type="molecule type" value="Genomic_DNA"/>
</dbReference>
<dbReference type="EMBL" id="AM942759">
    <property type="protein sequence ID" value="CAR47185.1"/>
    <property type="molecule type" value="Genomic_DNA"/>
</dbReference>
<dbReference type="PIR" id="D43719">
    <property type="entry name" value="D43719"/>
</dbReference>
<dbReference type="RefSeq" id="WP_004245262.1">
    <property type="nucleotide sequence ID" value="NC_010554.1"/>
</dbReference>
<dbReference type="SMR" id="P17086"/>
<dbReference type="BindingDB" id="P17086"/>
<dbReference type="MEROPS" id="M38.982"/>
<dbReference type="EnsemblBacteria" id="CAR47185">
    <property type="protein sequence ID" value="CAR47185"/>
    <property type="gene ID" value="PMI3685"/>
</dbReference>
<dbReference type="GeneID" id="6801207"/>
<dbReference type="KEGG" id="pmr:PMI3685"/>
<dbReference type="eggNOG" id="COG0804">
    <property type="taxonomic scope" value="Bacteria"/>
</dbReference>
<dbReference type="HOGENOM" id="CLU_000980_0_0_6"/>
<dbReference type="UniPathway" id="UPA00258">
    <property type="reaction ID" value="UER00370"/>
</dbReference>
<dbReference type="Proteomes" id="UP000008319">
    <property type="component" value="Chromosome"/>
</dbReference>
<dbReference type="GO" id="GO:0005737">
    <property type="term" value="C:cytoplasm"/>
    <property type="evidence" value="ECO:0007669"/>
    <property type="project" value="UniProtKB-SubCell"/>
</dbReference>
<dbReference type="GO" id="GO:0016151">
    <property type="term" value="F:nickel cation binding"/>
    <property type="evidence" value="ECO:0007669"/>
    <property type="project" value="UniProtKB-UniRule"/>
</dbReference>
<dbReference type="GO" id="GO:0009039">
    <property type="term" value="F:urease activity"/>
    <property type="evidence" value="ECO:0007669"/>
    <property type="project" value="UniProtKB-UniRule"/>
</dbReference>
<dbReference type="GO" id="GO:0043419">
    <property type="term" value="P:urea catabolic process"/>
    <property type="evidence" value="ECO:0007669"/>
    <property type="project" value="UniProtKB-UniRule"/>
</dbReference>
<dbReference type="CDD" id="cd00375">
    <property type="entry name" value="Urease_alpha"/>
    <property type="match status" value="1"/>
</dbReference>
<dbReference type="Gene3D" id="3.20.20.140">
    <property type="entry name" value="Metal-dependent hydrolases"/>
    <property type="match status" value="1"/>
</dbReference>
<dbReference type="Gene3D" id="2.30.40.10">
    <property type="entry name" value="Urease, subunit C, domain 1"/>
    <property type="match status" value="1"/>
</dbReference>
<dbReference type="HAMAP" id="MF_01953">
    <property type="entry name" value="Urease_alpha"/>
    <property type="match status" value="1"/>
</dbReference>
<dbReference type="InterPro" id="IPR006680">
    <property type="entry name" value="Amidohydro-rel"/>
</dbReference>
<dbReference type="InterPro" id="IPR011059">
    <property type="entry name" value="Metal-dep_hydrolase_composite"/>
</dbReference>
<dbReference type="InterPro" id="IPR032466">
    <property type="entry name" value="Metal_Hydrolase"/>
</dbReference>
<dbReference type="InterPro" id="IPR011612">
    <property type="entry name" value="Urease_alpha_N_dom"/>
</dbReference>
<dbReference type="InterPro" id="IPR050112">
    <property type="entry name" value="Urease_alpha_subunit"/>
</dbReference>
<dbReference type="InterPro" id="IPR017950">
    <property type="entry name" value="Urease_AS"/>
</dbReference>
<dbReference type="InterPro" id="IPR005848">
    <property type="entry name" value="Urease_asu"/>
</dbReference>
<dbReference type="InterPro" id="IPR017951">
    <property type="entry name" value="Urease_asu_c"/>
</dbReference>
<dbReference type="InterPro" id="IPR029754">
    <property type="entry name" value="Urease_Ni-bd"/>
</dbReference>
<dbReference type="NCBIfam" id="NF009685">
    <property type="entry name" value="PRK13206.1"/>
    <property type="match status" value="1"/>
</dbReference>
<dbReference type="NCBIfam" id="NF009686">
    <property type="entry name" value="PRK13207.1"/>
    <property type="match status" value="1"/>
</dbReference>
<dbReference type="NCBIfam" id="TIGR01792">
    <property type="entry name" value="urease_alph"/>
    <property type="match status" value="1"/>
</dbReference>
<dbReference type="PANTHER" id="PTHR43440">
    <property type="entry name" value="UREASE"/>
    <property type="match status" value="1"/>
</dbReference>
<dbReference type="PANTHER" id="PTHR43440:SF1">
    <property type="entry name" value="UREASE"/>
    <property type="match status" value="1"/>
</dbReference>
<dbReference type="Pfam" id="PF01979">
    <property type="entry name" value="Amidohydro_1"/>
    <property type="match status" value="1"/>
</dbReference>
<dbReference type="Pfam" id="PF00449">
    <property type="entry name" value="Urease_alpha"/>
    <property type="match status" value="1"/>
</dbReference>
<dbReference type="PRINTS" id="PR01752">
    <property type="entry name" value="UREASE"/>
</dbReference>
<dbReference type="SUPFAM" id="SSF51338">
    <property type="entry name" value="Composite domain of metallo-dependent hydrolases"/>
    <property type="match status" value="2"/>
</dbReference>
<dbReference type="SUPFAM" id="SSF51556">
    <property type="entry name" value="Metallo-dependent hydrolases"/>
    <property type="match status" value="1"/>
</dbReference>
<dbReference type="PROSITE" id="PS01120">
    <property type="entry name" value="UREASE_1"/>
    <property type="match status" value="1"/>
</dbReference>
<dbReference type="PROSITE" id="PS00145">
    <property type="entry name" value="UREASE_2"/>
    <property type="match status" value="1"/>
</dbReference>
<dbReference type="PROSITE" id="PS51368">
    <property type="entry name" value="UREASE_3"/>
    <property type="match status" value="1"/>
</dbReference>
<comment type="catalytic activity">
    <reaction evidence="1 3 5">
        <text>urea + 2 H2O + H(+) = hydrogencarbonate + 2 NH4(+)</text>
        <dbReference type="Rhea" id="RHEA:20557"/>
        <dbReference type="ChEBI" id="CHEBI:15377"/>
        <dbReference type="ChEBI" id="CHEBI:15378"/>
        <dbReference type="ChEBI" id="CHEBI:16199"/>
        <dbReference type="ChEBI" id="CHEBI:17544"/>
        <dbReference type="ChEBI" id="CHEBI:28938"/>
        <dbReference type="EC" id="3.5.1.5"/>
    </reaction>
</comment>
<comment type="cofactor">
    <cofactor evidence="1">
        <name>Ni cation</name>
        <dbReference type="ChEBI" id="CHEBI:25516"/>
    </cofactor>
    <text evidence="1">Binds 2 nickel ions per subunit.</text>
</comment>
<comment type="pathway">
    <text evidence="1">Nitrogen metabolism; urea degradation; CO(2) and NH(3) from urea (urease route): step 1/1.</text>
</comment>
<comment type="subunit">
    <text evidence="2">Probable heterotrimer of UreA (gamma), UreB (beta) and UreC (alpha) subunits. Three heterotrimers associate to form the active enzyme. The trimeric urease interacts with an accessory complex composed of UreD, UreF and UreG, which is required for the assembly of the nickel containing metallocenter of UreC. The UreE protein may also play a direct role in nickel transfer to the urease apoprotein.</text>
</comment>
<comment type="subcellular location">
    <subcellularLocation>
        <location evidence="1">Cytoplasm</location>
    </subcellularLocation>
</comment>
<comment type="induction">
    <text evidence="4">By urea.</text>
</comment>
<comment type="PTM">
    <text evidence="1">Carboxylation allows a single lysine to coordinate two nickel ions.</text>
</comment>
<comment type="similarity">
    <text evidence="1">Belongs to the metallo-dependent hydrolases superfamily. Urease alpha subunit family.</text>
</comment>
<sequence>MKTISRQAYADMFGPTTGDRLRLADTELFLEIEKDFTTYGEEVKFGGGKVIRDGMGQSQVVSAECVDVLITNAIILDYWGIVKADIGIKDGRIVGIGKAGNPDVQPNVDIVIGPGTEVVAGEGKIVTAGGIDTHIHFICPQQAQEGLVSGVTTFIGGGTGPVAGTNATTVTPGIWNMYRMLEAVDELPINVGLFGKGCVSQPEAIREQITAGAIGLKIHEDWGATPMAIHNCLNVADEMDVQVAIHSDTLNEGGFYEETVKAIAGRVIHVFHTEGAGGGHAPDVIKSVGEPNILPASTNPTMPYTINTVDEHLDMLMVCHHLDPSIPEDVAFAESRIRRETIAAEDILHDMGAISVMSSDSQAMGRVGEVILRTWQCAHKMKLQRGTLAGDSADNDNNRIKRYIAKYTINPALAHGIAHTVGSIEKGKLADIVLWDPAFFGVKPALIIKGGMVAYAPMGDINAAIPTPQPVHYRPMYACLGKAKYQTSMIFMSKAGIEAGVPEKLGLKSLIGRVEGCRHITKASMIHNNYVPHIELDPQTYIVKADGVPLVCEPATELPMAQRYFLF</sequence>
<gene>
    <name evidence="1" type="primary">ureC</name>
    <name type="ordered locus">PMI3685</name>
</gene>
<reference key="1">
    <citation type="journal article" date="1989" name="J. Bacteriol.">
        <title>Proteus mirabilis urease: nucleotide sequence determination and comparison with jack bean urease.</title>
        <authorList>
            <person name="Jones B.D."/>
            <person name="Mobley H.L.T."/>
        </authorList>
    </citation>
    <scope>NUCLEOTIDE SEQUENCE [GENOMIC DNA]</scope>
</reference>
<reference key="2">
    <citation type="journal article" date="2008" name="J. Bacteriol.">
        <title>Complete genome sequence of uropathogenic Proteus mirabilis, a master of both adherence and motility.</title>
        <authorList>
            <person name="Pearson M.M."/>
            <person name="Sebaihia M."/>
            <person name="Churcher C."/>
            <person name="Quail M.A."/>
            <person name="Seshasayee A.S."/>
            <person name="Luscombe N.M."/>
            <person name="Abdellah Z."/>
            <person name="Arrosmith C."/>
            <person name="Atkin B."/>
            <person name="Chillingworth T."/>
            <person name="Hauser H."/>
            <person name="Jagels K."/>
            <person name="Moule S."/>
            <person name="Mungall K."/>
            <person name="Norbertczak H."/>
            <person name="Rabbinowitsch E."/>
            <person name="Walker D."/>
            <person name="Whithead S."/>
            <person name="Thomson N.R."/>
            <person name="Rather P.N."/>
            <person name="Parkhill J."/>
            <person name="Mobley H.L.T."/>
        </authorList>
    </citation>
    <scope>NUCLEOTIDE SEQUENCE [LARGE SCALE GENOMIC DNA]</scope>
    <source>
        <strain>HI4320</strain>
    </source>
</reference>
<reference key="3">
    <citation type="journal article" date="1990" name="Infect. Immun.">
        <title>Construction of a urease-negative mutant of Proteus mirabilis: analysis of virulence in a mouse model of ascending urinary tract infection.</title>
        <authorList>
            <person name="Jones B.D."/>
            <person name="Lockatell C.V."/>
            <person name="Johnson D.E."/>
            <person name="Warren J.W."/>
            <person name="Mobley H.L.T."/>
        </authorList>
    </citation>
    <scope>UREASE AS A VIRULENCE FACTOR</scope>
</reference>
<reference key="4">
    <citation type="journal article" date="1993" name="Infect. Immun.">
        <title>Proteus mirabilis urease: histidine 320 of UreC is essential for urea hydrolysis and nickel ion binding within the native enzyme.</title>
        <authorList>
            <person name="Sriwanthana B."/>
            <person name="Mobley H.L.T."/>
        </authorList>
    </citation>
    <scope>CATALYTIC ACTIVITY</scope>
    <scope>MUTAGENESIS OF HIS-312; CYS-319; HIS-320; HIS-321; HIS-472; HIS-527 AND HIS-533</scope>
</reference>
<reference key="5">
    <citation type="journal article" date="1993" name="J. Bacteriol.">
        <title>Proteus mirabilis urease: transcriptional regulation by UreR.</title>
        <authorList>
            <person name="Nicholson E.B."/>
            <person name="Concaugh E.A."/>
            <person name="Foxall P.A."/>
            <person name="Island M.D."/>
            <person name="Mobley H.L.T."/>
        </authorList>
    </citation>
    <scope>INDUCTION</scope>
</reference>
<reference key="6">
    <citation type="journal article" date="1995" name="J. Bacteriol.">
        <title>Proteus mirabilis urease: operon fusion and linker insertion analysis of ure gene organization, regulation, and function.</title>
        <authorList>
            <person name="Island M.D."/>
            <person name="Mobley H.L.T."/>
        </authorList>
    </citation>
    <scope>CATALYTIC ACTIVITY</scope>
    <scope>MUTAGENESIS OF VAL-267; GLY-422; MET-489 AND ASP-537</scope>
</reference>
<reference key="7">
    <citation type="journal article" date="2001" name="J. Bacteriol.">
        <title>Interaction of Proteus mirabilis urease apoenzyme and accessory proteins identified with yeast two-hybrid technology.</title>
        <authorList>
            <person name="Heimer S.R."/>
            <person name="Mobley H.L.T."/>
        </authorList>
    </citation>
    <scope>INTERACTION WITH UREA AND URED</scope>
</reference>